<keyword id="KW-0014">AIDS</keyword>
<keyword id="KW-0053">Apoptosis</keyword>
<keyword id="KW-0244">Early protein</keyword>
<keyword id="KW-1032">Host cell membrane</keyword>
<keyword id="KW-1040">Host Golgi apparatus</keyword>
<keyword id="KW-1043">Host membrane</keyword>
<keyword id="KW-0945">Host-virus interaction</keyword>
<keyword id="KW-1080">Inhibition of host adaptive immune response by virus</keyword>
<keyword id="KW-1083">Inhibition of host autophagy by virus</keyword>
<keyword id="KW-1115">Inhibition of host MHC class I molecule presentation by virus</keyword>
<keyword id="KW-1116">Inhibition of host MHC class II molecule presentation by virus</keyword>
<keyword id="KW-0449">Lipoprotein</keyword>
<keyword id="KW-0472">Membrane</keyword>
<keyword id="KW-0519">Myristate</keyword>
<keyword id="KW-0597">Phosphoprotein</keyword>
<keyword id="KW-0964">Secreted</keyword>
<keyword id="KW-0729">SH3-binding</keyword>
<keyword id="KW-0899">Viral immunoevasion</keyword>
<keyword id="KW-0946">Virion</keyword>
<keyword id="KW-0843">Virulence</keyword>
<evidence type="ECO:0000255" key="1">
    <source>
        <dbReference type="HAMAP-Rule" id="MF_04078"/>
    </source>
</evidence>
<dbReference type="EMBL" id="M15896">
    <property type="protein sequence ID" value="AAB53951.1"/>
    <property type="molecule type" value="Genomic_RNA"/>
</dbReference>
<dbReference type="PIR" id="B44963">
    <property type="entry name" value="B44963"/>
</dbReference>
<dbReference type="SMR" id="P05859"/>
<dbReference type="GO" id="GO:0005576">
    <property type="term" value="C:extracellular region"/>
    <property type="evidence" value="ECO:0007669"/>
    <property type="project" value="UniProtKB-SubCell"/>
</dbReference>
<dbReference type="GO" id="GO:0044178">
    <property type="term" value="C:host cell Golgi membrane"/>
    <property type="evidence" value="ECO:0007669"/>
    <property type="project" value="UniProtKB-SubCell"/>
</dbReference>
<dbReference type="GO" id="GO:0020002">
    <property type="term" value="C:host cell plasma membrane"/>
    <property type="evidence" value="ECO:0007669"/>
    <property type="project" value="UniProtKB-SubCell"/>
</dbReference>
<dbReference type="GO" id="GO:0016020">
    <property type="term" value="C:membrane"/>
    <property type="evidence" value="ECO:0007669"/>
    <property type="project" value="UniProtKB-UniRule"/>
</dbReference>
<dbReference type="GO" id="GO:0044423">
    <property type="term" value="C:virion component"/>
    <property type="evidence" value="ECO:0007669"/>
    <property type="project" value="UniProtKB-UniRule"/>
</dbReference>
<dbReference type="GO" id="GO:0005525">
    <property type="term" value="F:GTP binding"/>
    <property type="evidence" value="ECO:0007669"/>
    <property type="project" value="UniProtKB-UniRule"/>
</dbReference>
<dbReference type="GO" id="GO:0017124">
    <property type="term" value="F:SH3 domain binding"/>
    <property type="evidence" value="ECO:0007669"/>
    <property type="project" value="UniProtKB-UniRule"/>
</dbReference>
<dbReference type="GO" id="GO:0046776">
    <property type="term" value="P:symbiont-mediated suppression of host antigen processing and presentation of peptide antigen via MHC class I"/>
    <property type="evidence" value="ECO:0007669"/>
    <property type="project" value="UniProtKB-UniRule"/>
</dbReference>
<dbReference type="GO" id="GO:0039505">
    <property type="term" value="P:symbiont-mediated suppression of host antigen processing and presentation of peptide antigen via MHC class II"/>
    <property type="evidence" value="ECO:0007669"/>
    <property type="project" value="UniProtKB-UniRule"/>
</dbReference>
<dbReference type="GO" id="GO:0140321">
    <property type="term" value="P:symbiont-mediated suppression of host autophagy"/>
    <property type="evidence" value="ECO:0007669"/>
    <property type="project" value="UniProtKB-KW"/>
</dbReference>
<dbReference type="Gene3D" id="4.10.890.10">
    <property type="entry name" value="HIV 1 nef anchor domain"/>
    <property type="match status" value="1"/>
</dbReference>
<dbReference type="Gene3D" id="3.30.62.10">
    <property type="entry name" value="Nef Regulatory Factor"/>
    <property type="match status" value="1"/>
</dbReference>
<dbReference type="HAMAP" id="MF_04078">
    <property type="entry name" value="NEF_HIV"/>
    <property type="match status" value="1"/>
</dbReference>
<dbReference type="InterPro" id="IPR027480">
    <property type="entry name" value="HIV-1_Nef_anchor_sf"/>
</dbReference>
<dbReference type="InterPro" id="IPR027481">
    <property type="entry name" value="HIV-1_Nef_core_sf"/>
</dbReference>
<dbReference type="InterPro" id="IPR001558">
    <property type="entry name" value="HIV_Nef"/>
</dbReference>
<dbReference type="Pfam" id="PF00469">
    <property type="entry name" value="F-protein"/>
    <property type="match status" value="1"/>
</dbReference>
<dbReference type="SUPFAM" id="SSF55671">
    <property type="entry name" value="Regulatory factor Nef"/>
    <property type="match status" value="1"/>
</dbReference>
<gene>
    <name evidence="1" type="primary">nef</name>
</gene>
<organism>
    <name type="scientific">Human immunodeficiency virus type 1 group M subtype A (isolate Z321)</name>
    <name type="common">HIV-1</name>
    <dbReference type="NCBI Taxonomy" id="11692"/>
    <lineage>
        <taxon>Viruses</taxon>
        <taxon>Riboviria</taxon>
        <taxon>Pararnavirae</taxon>
        <taxon>Artverviricota</taxon>
        <taxon>Revtraviricetes</taxon>
        <taxon>Ortervirales</taxon>
        <taxon>Retroviridae</taxon>
        <taxon>Orthoretrovirinae</taxon>
        <taxon>Lentivirus</taxon>
        <taxon>Human immunodeficiency virus type 1</taxon>
    </lineage>
</organism>
<sequence>MGNKWSKGWPAVRERIRQTPPAPPAAEGVGAASQDLAKHGAISSSNTATNNPDCAWLEAQEESEEVGFPVRPQVPLRPMTFKGAFDLSFFLKEKGGLDGLIYSKKRQEILDLWVYHTQGFFPDWHNYTPGPGTRYPLCFGWCFKLVPVDPREVEEANTGENNCLLHPMSQHGMDDDEREVLMWKFDSSLARKHLAREMHPEFYKD</sequence>
<comment type="function">
    <text evidence="1">Factor of infectivity and pathogenicity, required for optimal virus replication. Alters numerous pathways of T-lymphocyte function and down-regulates immunity surface molecules in order to evade host defense and increase viral infectivity. Alters the functionality of other immunity cells, like dendritic cells, monocytes/macrophages and NK cells.</text>
</comment>
<comment type="function">
    <text evidence="1">In infected CD4(+) T-lymphocytes, down-regulates the surface MHC-I, mature MHC-II, CD4, CD28, CCR5 and CXCR4 molecules. Mediates internalization and degradation of host CD4 through the interaction of with the cytoplasmic tail of CD4, the recruitment of AP-2 (clathrin adapter protein complex 2), internalization through clathrin coated pits, and subsequent transport to endosomes and lysosomes for degradation. Diverts host MHC-I molecules to the trans-Golgi network-associated endosomal compartments by an endocytic pathway to finally target them for degradation. MHC-I down-regulation may involve AP-1 (clathrin adapter protein complex 1) or possibly Src family kinase-ZAP70/Syk-PI3K cascade recruited by PACS2. In consequence infected cells are masked for immune recognition by cytotoxic T-lymphocytes. Decreasing the number of immune receptors also prevents reinfection by more HIV particles (superinfection). Down-regulates host SERINC3 and SERINC5 thereby excluding these proteins from the viral particles. Virion infectivity is drastically higher when SERINC3 or SERINC5 are excluded from the viral envelope, because these host antiviral proteins impair the membrane fusion event necessary for subsequent virion penetration.</text>
</comment>
<comment type="function">
    <text evidence="1">Bypasses host T-cell signaling by inducing a transcriptional program nearly identical to that of anti-CD3 cell activation. Interaction with TCR-zeta chain up-regulates the Fas ligand (FasL). Increasing surface FasL molecules and decreasing surface MHC-I molecules on infected CD4(+) cells send attacking cytotoxic CD8+ T-lymphocytes into apoptosis.</text>
</comment>
<comment type="function">
    <text evidence="1">Plays a role in optimizing the host cell environment for viral replication without causing cell death by apoptosis. Protects the infected cells from apoptosis in order to keep them alive until the next virus generation is ready to strike. Inhibits the Fas and TNFR-mediated death signals by blocking MAP3K5/ASK1. Decreases the half-life of TP53, protecting the infected cell against p53-mediated apoptosis. Inhibits the apoptotic signals regulated by the Bcl-2 family proteins through the formation of a Nef/PI3-kinase/PAK2 complex that leads to activation of PAK2 and induces phosphorylation of host BAD.</text>
</comment>
<comment type="function">
    <text evidence="1">Extracellular Nef protein targets CD4(+) T-lymphocytes for apoptosis by interacting with CXCR4 surface receptors.</text>
</comment>
<comment type="subunit">
    <text evidence="1">Monomer; cytosolic form. Homodimer; membrane bound form. Interacts with Nef associated p21-activated kinase (PAK2); this interaction activates PAK2. Associates with the Nef-MHC-I-AP1 complex; this complex is required for MHC-I internalization. Interacts (via C-terminus) with host PI3-kinase. Interacts with host PACS1; this interaction seems to be weak. Interacts with host PACS2. Interacts with host LCK and MAPK3; these interactions inhibit the kinase activity of the latter. Interacts with host ATP6V1H; this interaction may play a role in CD4 endocytosis. Associates with the CD4-Nef-AP2 complex; this complex is required for CD4 internalization. Interacts with host AP2 subunit alpha and AP2 subunit sigma2. Interacts with TCR-zeta chain; this interaction up-regulates the Fas ligand (FasL) surface expression. Interacts with host HCK, LYN, and SRC; these interactions activate the Src family kinases. Interacts with MAP3K5; this interaction inhibits the Fas and TNFR-mediated death signals. Interacts with beta-COP and PTE1. Interacts with human RACK1; this increases Nef phosphorylation by PKC. Interacts with TP53; this interaction decreases the half-life of TP53, protecting the infected cell against p53-mediated apoptosis.</text>
</comment>
<comment type="subcellular location">
    <subcellularLocation>
        <location evidence="1">Host cell membrane</location>
        <topology evidence="1">Lipid-anchor</topology>
        <orientation evidence="1">Cytoplasmic side</orientation>
    </subcellularLocation>
    <subcellularLocation>
        <location evidence="1">Virion</location>
    </subcellularLocation>
    <subcellularLocation>
        <location evidence="1">Secreted</location>
    </subcellularLocation>
    <subcellularLocation>
        <location evidence="1">Host Golgi apparatus membrane</location>
    </subcellularLocation>
    <text evidence="1">TGN localization requires PACS1. Associates with the inner plasma membrane through its N-terminal domain. Nef stimulates its own export via the release of exosomes. Incorporated in virions at a rate of about 10 molecules per virion, where it is cleaved.</text>
</comment>
<comment type="induction">
    <text evidence="1">Expressed early in the viral replication cycle.</text>
</comment>
<comment type="domain">
    <text evidence="1">The N-terminal domain is composed of the N-myristoyl glycine and of a cluster of positively charged amino acids. It is required for inner plasma membrane targeting of Nef and virion incorporation, and thereby for infectivity. This domain is also involved in binding to TP53.</text>
</comment>
<comment type="domain">
    <text evidence="1">The SH3-binding domain constituted of PxxP motifs mediates binding to several Src family proteins thereby regulating their tyrosine kinase activity. The same motifs also mediates the association with MAPK3, PI3-kinase and TCR-zeta.</text>
</comment>
<comment type="domain">
    <text evidence="1">The dileucine internalization motif and a diacidic motif seem to be required for binding to AP-2.</text>
</comment>
<comment type="domain">
    <text evidence="1">The acidic region binds to the sorting protein PACS-2, which targets Nef to the paranuclear region, enabling the PxxP motif to direct assembly of an SFK/ZAP-70/PI3K complex that accelerates endocytosis of cell-surface MHC-I.</text>
</comment>
<comment type="PTM">
    <text evidence="1">The virion-associated Nef proteins are cleaved by the viral protease to release the soluble C-terminal core protein. Nef is probably cleaved concomitantly with viral structural proteins on maturation of virus particles.</text>
</comment>
<comment type="PTM">
    <text evidence="1">Myristoylated.</text>
</comment>
<comment type="PTM">
    <text evidence="1">Phosphorylated on serine residues, probably by host PKCdelta and theta.</text>
</comment>
<comment type="miscellaneous">
    <text evidence="1">HIV-1 lineages are divided in three main groups, M (for Major), O (for Outlier), and N (for New, or Non-M, Non-O). The vast majority of strains found worldwide belong to the group M. Group O seems to be endemic to and largely confined to Cameroon and neighboring countries in West Central Africa, where these viruses represent a small minority of HIV-1 strains. The group N is represented by a limited number of isolates from Cameroonian persons. The group M is further subdivided in 9 clades or subtypes (A to D, F to H, J and K).</text>
</comment>
<comment type="similarity">
    <text evidence="1">Belongs to the lentivirus primate group Nef protein family.</text>
</comment>
<protein>
    <recommendedName>
        <fullName evidence="1">Protein Nef</fullName>
    </recommendedName>
    <alternativeName>
        <fullName evidence="1">3'ORF</fullName>
    </alternativeName>
    <alternativeName>
        <fullName evidence="1">Negative factor</fullName>
        <shortName evidence="1">F-protein</shortName>
    </alternativeName>
    <component>
        <recommendedName>
            <fullName evidence="1">C-terminal core protein</fullName>
        </recommendedName>
    </component>
</protein>
<name>NEF_HV1ZH</name>
<feature type="initiator methionine" description="Removed; by host" evidence="1">
    <location>
        <position position="1"/>
    </location>
</feature>
<feature type="chain" id="PRO_0000038345" description="Protein Nef" evidence="1">
    <location>
        <begin position="2"/>
        <end position="205"/>
    </location>
</feature>
<feature type="chain" id="PRO_0000038346" description="C-terminal core protein" evidence="1">
    <location>
        <begin position="57"/>
        <end position="205"/>
    </location>
</feature>
<feature type="region of interest" description="Acidic; interacts with host PACS1 and PACS2; stabilizes the interaction of NEF/MHC-I with host AP1M1; necessary for MHC-I internalization" evidence="1">
    <location>
        <begin position="61"/>
        <end position="65"/>
    </location>
</feature>
<feature type="region of interest" description="SH3-binding; interaction with Src family tyrosine kinases" evidence="1">
    <location>
        <begin position="69"/>
        <end position="78"/>
    </location>
</feature>
<feature type="region of interest" description="Mediates dimerization, Nef-PTE1 interaction" evidence="1">
    <location>
        <begin position="108"/>
        <end position="124"/>
    </location>
</feature>
<feature type="region of interest" description="Binding to ATP6V1H" evidence="1">
    <location>
        <begin position="148"/>
        <end position="180"/>
    </location>
</feature>
<feature type="short sequence motif" description="PxxP; stabilizes the interaction of NEF/MHC-I with host AP1M1; necessary for MHC-I internalization" evidence="1">
    <location>
        <begin position="72"/>
        <end position="75"/>
    </location>
</feature>
<feature type="short sequence motif" description="Dileucine internalization motif; necessary for CD4 internalization" evidence="1">
    <location>
        <begin position="164"/>
        <end position="165"/>
    </location>
</feature>
<feature type="short sequence motif" description="Diacidic; necessary for CD4 internalization" evidence="1">
    <location>
        <begin position="174"/>
        <end position="175"/>
    </location>
</feature>
<feature type="site" description="Cleavage; by viral protease" evidence="1">
    <location>
        <begin position="56"/>
        <end position="57"/>
    </location>
</feature>
<feature type="modified residue" description="Phosphoserine; by host" evidence="1">
    <location>
        <position position="6"/>
    </location>
</feature>
<feature type="lipid moiety-binding region" description="N-myristoyl glycine; by host" evidence="1">
    <location>
        <position position="2"/>
    </location>
</feature>
<organismHost>
    <name type="scientific">Homo sapiens</name>
    <name type="common">Human</name>
    <dbReference type="NCBI Taxonomy" id="9606"/>
</organismHost>
<accession>P05859</accession>
<proteinExistence type="inferred from homology"/>
<reference key="1">
    <citation type="journal article" date="1989" name="AIDS Res. Hum. Retroviruses">
        <title>Molecular characterization of HIV-1 isolated from a serum collected in 1976: nucleotide sequence comparison to recent isolates and generation of hybrid HIV.</title>
        <authorList>
            <person name="Srinivasan A."/>
            <person name="York D."/>
            <person name="Butler D. Jr."/>
            <person name="Jannoun-Nasr R."/>
            <person name="Getchell J."/>
            <person name="McCormick J."/>
            <person name="Ou C.Y."/>
            <person name="Myers G."/>
            <person name="Smith T."/>
            <person name="Chen E."/>
        </authorList>
    </citation>
    <scope>NUCLEOTIDE SEQUENCE [GENOMIC RNA]</scope>
</reference>